<feature type="chain" id="PRO_1000007629" description="Large ribosomal subunit protein uL29">
    <location>
        <begin position="1"/>
        <end position="68"/>
    </location>
</feature>
<keyword id="KW-0687">Ribonucleoprotein</keyword>
<keyword id="KW-0689">Ribosomal protein</keyword>
<sequence>MKLQEIKDFVKELRGLSQEELAKKENELKKELFDLRFQAAAGQLEKTARLDEVKKQIARVKTVQSEMK</sequence>
<protein>
    <recommendedName>
        <fullName evidence="1">Large ribosomal subunit protein uL29</fullName>
    </recommendedName>
    <alternativeName>
        <fullName evidence="2">50S ribosomal protein L29</fullName>
    </alternativeName>
</protein>
<reference key="1">
    <citation type="journal article" date="2005" name="J. Infect. Dis.">
        <title>Genome sequence of a serotype M28 strain of group A Streptococcus: potential new insights into puerperal sepsis and bacterial disease specificity.</title>
        <authorList>
            <person name="Green N.M."/>
            <person name="Zhang S."/>
            <person name="Porcella S.F."/>
            <person name="Nagiec M.J."/>
            <person name="Barbian K.D."/>
            <person name="Beres S.B."/>
            <person name="Lefebvre R.B."/>
            <person name="Musser J.M."/>
        </authorList>
    </citation>
    <scope>NUCLEOTIDE SEQUENCE [LARGE SCALE GENOMIC DNA]</scope>
    <source>
        <strain>MGAS6180</strain>
    </source>
</reference>
<evidence type="ECO:0000255" key="1">
    <source>
        <dbReference type="HAMAP-Rule" id="MF_00374"/>
    </source>
</evidence>
<evidence type="ECO:0000305" key="2"/>
<name>RL29_STRPM</name>
<dbReference type="EMBL" id="CP000056">
    <property type="protein sequence ID" value="AAX71165.1"/>
    <property type="molecule type" value="Genomic_DNA"/>
</dbReference>
<dbReference type="RefSeq" id="WP_000775731.1">
    <property type="nucleotide sequence ID" value="NC_007296.2"/>
</dbReference>
<dbReference type="SMR" id="Q48VU1"/>
<dbReference type="GeneID" id="69900034"/>
<dbReference type="KEGG" id="spb:M28_Spy0051"/>
<dbReference type="HOGENOM" id="CLU_158491_5_2_9"/>
<dbReference type="GO" id="GO:0022625">
    <property type="term" value="C:cytosolic large ribosomal subunit"/>
    <property type="evidence" value="ECO:0007669"/>
    <property type="project" value="TreeGrafter"/>
</dbReference>
<dbReference type="GO" id="GO:0003735">
    <property type="term" value="F:structural constituent of ribosome"/>
    <property type="evidence" value="ECO:0007669"/>
    <property type="project" value="InterPro"/>
</dbReference>
<dbReference type="GO" id="GO:0006412">
    <property type="term" value="P:translation"/>
    <property type="evidence" value="ECO:0007669"/>
    <property type="project" value="UniProtKB-UniRule"/>
</dbReference>
<dbReference type="CDD" id="cd00427">
    <property type="entry name" value="Ribosomal_L29_HIP"/>
    <property type="match status" value="1"/>
</dbReference>
<dbReference type="FunFam" id="1.10.287.310:FF:000001">
    <property type="entry name" value="50S ribosomal protein L29"/>
    <property type="match status" value="1"/>
</dbReference>
<dbReference type="Gene3D" id="1.10.287.310">
    <property type="match status" value="1"/>
</dbReference>
<dbReference type="HAMAP" id="MF_00374">
    <property type="entry name" value="Ribosomal_uL29"/>
    <property type="match status" value="1"/>
</dbReference>
<dbReference type="InterPro" id="IPR050063">
    <property type="entry name" value="Ribosomal_protein_uL29"/>
</dbReference>
<dbReference type="InterPro" id="IPR001854">
    <property type="entry name" value="Ribosomal_uL29"/>
</dbReference>
<dbReference type="InterPro" id="IPR018254">
    <property type="entry name" value="Ribosomal_uL29_CS"/>
</dbReference>
<dbReference type="InterPro" id="IPR036049">
    <property type="entry name" value="Ribosomal_uL29_sf"/>
</dbReference>
<dbReference type="NCBIfam" id="TIGR00012">
    <property type="entry name" value="L29"/>
    <property type="match status" value="1"/>
</dbReference>
<dbReference type="PANTHER" id="PTHR10916">
    <property type="entry name" value="60S RIBOSOMAL PROTEIN L35/50S RIBOSOMAL PROTEIN L29"/>
    <property type="match status" value="1"/>
</dbReference>
<dbReference type="PANTHER" id="PTHR10916:SF0">
    <property type="entry name" value="LARGE RIBOSOMAL SUBUNIT PROTEIN UL29C"/>
    <property type="match status" value="1"/>
</dbReference>
<dbReference type="Pfam" id="PF00831">
    <property type="entry name" value="Ribosomal_L29"/>
    <property type="match status" value="1"/>
</dbReference>
<dbReference type="SUPFAM" id="SSF46561">
    <property type="entry name" value="Ribosomal protein L29 (L29p)"/>
    <property type="match status" value="1"/>
</dbReference>
<dbReference type="PROSITE" id="PS00579">
    <property type="entry name" value="RIBOSOMAL_L29"/>
    <property type="match status" value="1"/>
</dbReference>
<proteinExistence type="inferred from homology"/>
<gene>
    <name evidence="1" type="primary">rpmC</name>
    <name type="ordered locus">M28_Spy0051</name>
</gene>
<comment type="similarity">
    <text evidence="1">Belongs to the universal ribosomal protein uL29 family.</text>
</comment>
<accession>Q48VU1</accession>
<organism>
    <name type="scientific">Streptococcus pyogenes serotype M28 (strain MGAS6180)</name>
    <dbReference type="NCBI Taxonomy" id="319701"/>
    <lineage>
        <taxon>Bacteria</taxon>
        <taxon>Bacillati</taxon>
        <taxon>Bacillota</taxon>
        <taxon>Bacilli</taxon>
        <taxon>Lactobacillales</taxon>
        <taxon>Streptococcaceae</taxon>
        <taxon>Streptococcus</taxon>
    </lineage>
</organism>